<sequence>MKVTVDVEADSPFLKALQKAFPAFEVESQQVTPNDHANARAFSHLATKLIEQEVPTGVTILDVGSAPARRLMSDHTYHCICPMKSAEDPERLANYARKLAKASGTVLDKNVSGKITDLQDVMATPDLESPTFCLHTDETCRTRAEVAVYQDVYAVHAPTSLYHQAIKGVRTAYWIGFDTTPFMFEALAGAYPAYSTNWADEQVLQARNIGLCATGLSEGRRGKLSIMRKKCLRPSDRVMFSVGSTLYTESRKLLRSWHLPSVFHLKGKNSFTCRCDTVVSCEGYVVKKITISPGIYGKTVDYAVTHHAEGFLMCKITDTVRGERVSFPVCTYVPATICDQMTGILATDVTPEDAQKLLVGLNQRIVVNGRTQRNTNTMKNYLLPVVAQAFSKWAREARADMEDEKPLGTRERTLTCCCLWAFKSHKIHTMYKRPETQTIVKVPSTFDSFVIPSLWSSSLSMGIRQRIKLLLSARMAQGLPYSGDRTEARAAEEEEKEVQEAELTRAALPPLVSGSCADDIAQVDVEELTFRAGAGVVETPRNALKVTPQAHDHLIGSYLILSPQTVLKSEKLAPIHPLAEQVTVMTHSGRSGRYPVDKYDGRVLIPTGAAIPVSEFQALSESATMVYNEREFINRKLHHIALYGPALNTDEESYEKVRAERAETEYVFDVDKKACIKKEEASGLVLTGDLINPPFHEFAYEGLKIRPAAPYHTTIIGVFGVPGSGKSAIIKNMVTTRDLVASGKKENCQEIMNDVKRQRGLDVTARTVDSILLNGCKKGVENLYVDEAFACHSGTLLALIALVRPSGKVVLCGDPKQCGFFNLMQLKVHYNHNICTRVLHKSISRRCTLPVTAIVSTLHYQGKMRTTNRCNTPIQIDTTGSSKPASGDIVLTCFRGWVKQLQIDYRGHEVMTAAASQGLTRKGVYAVRQKVNENPLYSPLSEHVNVLLTRTENRLVWKTLSGDPWIKVLTNVPRGDFSATLEEWHEEHDGIMRVLNERPAEVDPFQNKAKVCWAKCLVQVLETAGIRMTADEWNTILAFREDRAYSPEVALNEICTRYYGVDLDSGLFSAQSVSLFYENNHWDNRPGGRMYGFNHEVARKYAARFPFLRGNMNSGLQLNVPERKLQPFSAECNIVPSNRRLPHALVTSYQQCRGERVEWLLKKIPGHQMLLVSEYNLVIPHKRVFWIAPPRVSGADRTYDLDLGLPMDAGRYDLVFVNIHTEYRQHHYQQCVDHSMRLQMLGGDSLHLLRPGGSLLMRAYGYADRVSEMVVTALARKFSAFRVLRPACVTSNTEVFLLFSNFDNGRRAVTLHQANQKLSSMYACNGLHTAGCAPSYRVRRADISGHSEEAVVNAANAKGTVSDGVCRAVAKKWPSSFKGAATPVGTAKMIRADGMTVIHAVGPNFSTVTEAEGDRELAAAYRAVASIISTNNIKSVAVPLLSTGTFSGGKDRVMQSLNHLFTALDATDADVVIYCRDKNWEKKIQEAIDRRTAIELVSEDVTLETDLVRVHPDSCLVGRNGYSATDGKLYSYLEGTRFHQTAVDMAEISTLWPRLQDANEQICLYALGETMDSIRTKCPVEDADSSTPPKTVPCLCRYAMTAERVARLRMNNTKNIIVCSSFPLPKYRIEGVQKVKCDRVLIFDQTVPSLVSPRKYIQQPPEQLDNVSLTSTTSTGSAWSFPSETTYETMEVVAEVHTEPPIPPPRRRRAAVAQLRQDLEVTEEIEPYVTQQAEIMVMERVATTDIRAIPVPARRAITMPVPAPRVRKVATEPPLEPEAPIPAPRKRRTTSTSPPHNPEDFVPRVPVELPWEPEDLDIQFGDLEPRRRNTRDRDVSTGIQFGDIDFNQSXLGRAGAYIFSSDTGPGHLQQKSVRQHELPCETLYAHEDERIYPPAFDGEKEKVLQAKMQMAPTEANKSRYQSRKVENMKALIVERLREGAKLYLHEQTDKVPTYTSKYPRPVYSPSVDDSLSDPEVAVAACNSFLEENYPTVANYQITDEYDAYLDLVDGSESCLDRATFCPAKLRCYPKHHAYHQPQIRSAVPSPFQNTLQNVLAAATKRNCNVTQMRELPTMDSAVFNVESFKKYACTGEYWQEFKDNPIRITTENITTYVAKLKGPKAAALFAKTHNLVPLQEVPMDRFVMDMKRDVKVTPGTKHTEERPKVQVIQAAEPLATAYLCGIHRELVRRLKAVLTPNIHTLFDMSAEDFDAIIAAHFQPGDAVLETDIASFDKSQDDSLALTALMLLEDLGVDQELLDLIEAAFGEITSVHLPTGTRFKFGAMMKSGMFLTLFINTLLNIVIACRVLRDKLSSSACAAFIGDDNIVHGVRSDPLMAERCASWVNMEVKIIDATMCEKPPYFCGGFILYDSVAGTACRVADPLKRLFKLGKPLPADDNQDEDRRRALKDETVKWSRIGLREELDVALSSRYQVSGVGNITRAMSTLSKSLKSFRKIRGPIIHLYGGPK</sequence>
<organism>
    <name type="scientific">Getah virus</name>
    <name type="common">GETV</name>
    <dbReference type="NCBI Taxonomy" id="59300"/>
    <lineage>
        <taxon>Viruses</taxon>
        <taxon>Riboviria</taxon>
        <taxon>Orthornavirae</taxon>
        <taxon>Kitrinoviricota</taxon>
        <taxon>Alsuviricetes</taxon>
        <taxon>Martellivirales</taxon>
        <taxon>Togaviridae</taxon>
        <taxon>Alphavirus</taxon>
    </lineage>
</organism>
<evidence type="ECO:0000250" key="1">
    <source>
        <dbReference type="UniProtKB" id="O90368"/>
    </source>
</evidence>
<evidence type="ECO:0000250" key="2">
    <source>
        <dbReference type="UniProtKB" id="P03317"/>
    </source>
</evidence>
<evidence type="ECO:0000250" key="3">
    <source>
        <dbReference type="UniProtKB" id="P08411"/>
    </source>
</evidence>
<evidence type="ECO:0000250" key="4">
    <source>
        <dbReference type="UniProtKB" id="P27282"/>
    </source>
</evidence>
<evidence type="ECO:0000250" key="5">
    <source>
        <dbReference type="UniProtKB" id="P36328"/>
    </source>
</evidence>
<evidence type="ECO:0000250" key="6">
    <source>
        <dbReference type="UniProtKB" id="Q8JUX6"/>
    </source>
</evidence>
<evidence type="ECO:0000255" key="7">
    <source>
        <dbReference type="PROSITE-ProRule" id="PRU00490"/>
    </source>
</evidence>
<evidence type="ECO:0000255" key="8">
    <source>
        <dbReference type="PROSITE-ProRule" id="PRU00539"/>
    </source>
</evidence>
<evidence type="ECO:0000255" key="9">
    <source>
        <dbReference type="PROSITE-ProRule" id="PRU00853"/>
    </source>
</evidence>
<evidence type="ECO:0000255" key="10">
    <source>
        <dbReference type="PROSITE-ProRule" id="PRU00990"/>
    </source>
</evidence>
<evidence type="ECO:0000255" key="11">
    <source>
        <dbReference type="PROSITE-ProRule" id="PRU01079"/>
    </source>
</evidence>
<evidence type="ECO:0000256" key="12">
    <source>
        <dbReference type="SAM" id="MobiDB-lite"/>
    </source>
</evidence>
<evidence type="ECO:0000305" key="13"/>
<evidence type="ECO:0007829" key="14">
    <source>
        <dbReference type="PDB" id="6R0R"/>
    </source>
</evidence>
<protein>
    <recommendedName>
        <fullName>Polyprotein P1234</fullName>
        <shortName>P1234</shortName>
    </recommendedName>
    <alternativeName>
        <fullName>Non-structural polyprotein</fullName>
    </alternativeName>
    <component>
        <recommendedName>
            <fullName>Polyprotein P123'</fullName>
            <shortName>P123'</shortName>
        </recommendedName>
    </component>
    <component>
        <recommendedName>
            <fullName>Polyprotein P123</fullName>
            <shortName>P123</shortName>
        </recommendedName>
    </component>
    <component>
        <recommendedName>
            <fullName>mRNA-capping enzyme nsP1</fullName>
            <ecNumber evidence="4">2.1.1.-</ecNumber>
            <ecNumber evidence="2">2.7.7.-</ecNumber>
        </recommendedName>
        <alternativeName>
            <fullName>Non-structural protein 1</fullName>
        </alternativeName>
    </component>
    <component>
        <recommendedName>
            <fullName>Protease nsP2</fullName>
            <ecNumber evidence="6">3.4.22.-</ecNumber>
            <ecNumber evidence="6">3.6.1.15</ecNumber>
            <ecNumber evidence="3">3.6.1.74</ecNumber>
            <ecNumber evidence="6">3.6.4.13</ecNumber>
        </recommendedName>
        <alternativeName>
            <fullName>Non-structural protein 2</fullName>
            <shortName>nsP2</shortName>
        </alternativeName>
    </component>
    <component>
        <recommendedName>
            <fullName>Non-structural protein 3'</fullName>
            <shortName>nsP3'</shortName>
            <ecNumber evidence="13">3.1.3.84</ecNumber>
        </recommendedName>
    </component>
    <component>
        <recommendedName>
            <fullName>Non-structural protein 3</fullName>
            <shortName>nsP3</shortName>
            <ecNumber evidence="6">3.1.3.84</ecNumber>
        </recommendedName>
    </component>
    <component>
        <recommendedName>
            <fullName>RNA-directed RNA polymerase nsP4</fullName>
            <ecNumber evidence="2">2.7.7.19</ecNumber>
            <ecNumber evidence="8">2.7.7.48</ecNumber>
        </recommendedName>
        <alternativeName>
            <fullName>Non-structural protein 4</fullName>
            <shortName>nsP4</shortName>
        </alternativeName>
    </component>
</protein>
<accession>Q5Y389</accession>
<dbReference type="EC" id="2.1.1.-" evidence="4"/>
<dbReference type="EC" id="2.7.7.-" evidence="2"/>
<dbReference type="EC" id="3.4.22.-" evidence="6"/>
<dbReference type="EC" id="3.6.1.15" evidence="6"/>
<dbReference type="EC" id="3.6.1.74" evidence="3"/>
<dbReference type="EC" id="3.6.4.13" evidence="6"/>
<dbReference type="EC" id="3.1.3.84" evidence="13 6"/>
<dbReference type="EC" id="2.7.7.19" evidence="2"/>
<dbReference type="EC" id="2.7.7.48" evidence="8"/>
<dbReference type="EMBL" id="AY702913">
    <property type="protein sequence ID" value="AAU85259.1"/>
    <property type="molecule type" value="Genomic_RNA"/>
</dbReference>
<dbReference type="RefSeq" id="YP_164438.1">
    <property type="nucleotide sequence ID" value="NC_006558.1"/>
</dbReference>
<dbReference type="PDB" id="6QZU">
    <property type="method" value="X-ray"/>
    <property type="resolution" value="2.00 A"/>
    <property type="chains" value="A/B=1333-1492"/>
</dbReference>
<dbReference type="PDB" id="6R0F">
    <property type="method" value="X-ray"/>
    <property type="resolution" value="2.05 A"/>
    <property type="chains" value="A/B=1333-1492"/>
</dbReference>
<dbReference type="PDB" id="6R0G">
    <property type="method" value="X-ray"/>
    <property type="resolution" value="1.70 A"/>
    <property type="chains" value="A/B=1333-1492"/>
</dbReference>
<dbReference type="PDB" id="6R0P">
    <property type="method" value="X-ray"/>
    <property type="resolution" value="1.60 A"/>
    <property type="chains" value="A/B=1333-1492"/>
</dbReference>
<dbReference type="PDB" id="6R0R">
    <property type="method" value="X-ray"/>
    <property type="resolution" value="1.45 A"/>
    <property type="chains" value="A=1333-1492"/>
</dbReference>
<dbReference type="PDB" id="6R0T">
    <property type="method" value="X-ray"/>
    <property type="resolution" value="1.85 A"/>
    <property type="chains" value="A/B=1333-1492"/>
</dbReference>
<dbReference type="PDBsum" id="6QZU"/>
<dbReference type="PDBsum" id="6R0F"/>
<dbReference type="PDBsum" id="6R0G"/>
<dbReference type="PDBsum" id="6R0P"/>
<dbReference type="PDBsum" id="6R0R"/>
<dbReference type="PDBsum" id="6R0T"/>
<dbReference type="SMR" id="Q5Y389"/>
<dbReference type="IntAct" id="Q5Y389">
    <property type="interactions" value="2"/>
</dbReference>
<dbReference type="MEROPS" id="C09.001"/>
<dbReference type="GeneID" id="5075854"/>
<dbReference type="KEGG" id="vg:5075854"/>
<dbReference type="Proteomes" id="UP000008625">
    <property type="component" value="Genome"/>
</dbReference>
<dbReference type="GO" id="GO:0044162">
    <property type="term" value="C:host cell cytoplasmic vesicle membrane"/>
    <property type="evidence" value="ECO:0007669"/>
    <property type="project" value="UniProtKB-SubCell"/>
</dbReference>
<dbReference type="GO" id="GO:0044176">
    <property type="term" value="C:host cell filopodium"/>
    <property type="evidence" value="ECO:0007669"/>
    <property type="project" value="UniProtKB-SubCell"/>
</dbReference>
<dbReference type="GO" id="GO:0042025">
    <property type="term" value="C:host cell nucleus"/>
    <property type="evidence" value="ECO:0007669"/>
    <property type="project" value="UniProtKB-SubCell"/>
</dbReference>
<dbReference type="GO" id="GO:0020002">
    <property type="term" value="C:host cell plasma membrane"/>
    <property type="evidence" value="ECO:0007669"/>
    <property type="project" value="UniProtKB-SubCell"/>
</dbReference>
<dbReference type="GO" id="GO:0016020">
    <property type="term" value="C:membrane"/>
    <property type="evidence" value="ECO:0007669"/>
    <property type="project" value="UniProtKB-KW"/>
</dbReference>
<dbReference type="GO" id="GO:0005524">
    <property type="term" value="F:ATP binding"/>
    <property type="evidence" value="ECO:0007669"/>
    <property type="project" value="UniProtKB-KW"/>
</dbReference>
<dbReference type="GO" id="GO:0016887">
    <property type="term" value="F:ATP hydrolysis activity"/>
    <property type="evidence" value="ECO:0007669"/>
    <property type="project" value="RHEA"/>
</dbReference>
<dbReference type="GO" id="GO:0008234">
    <property type="term" value="F:cysteine-type peptidase activity"/>
    <property type="evidence" value="ECO:0007669"/>
    <property type="project" value="UniProtKB-KW"/>
</dbReference>
<dbReference type="GO" id="GO:0005525">
    <property type="term" value="F:GTP binding"/>
    <property type="evidence" value="ECO:0007669"/>
    <property type="project" value="UniProtKB-KW"/>
</dbReference>
<dbReference type="GO" id="GO:0046872">
    <property type="term" value="F:metal ion binding"/>
    <property type="evidence" value="ECO:0007669"/>
    <property type="project" value="UniProtKB-KW"/>
</dbReference>
<dbReference type="GO" id="GO:0140818">
    <property type="term" value="F:mRNA 5'-triphosphate monophosphatase activity"/>
    <property type="evidence" value="ECO:0007669"/>
    <property type="project" value="RHEA"/>
</dbReference>
<dbReference type="GO" id="GO:0008174">
    <property type="term" value="F:mRNA methyltransferase activity"/>
    <property type="evidence" value="ECO:0007669"/>
    <property type="project" value="InterPro"/>
</dbReference>
<dbReference type="GO" id="GO:1990817">
    <property type="term" value="F:poly(A) RNA polymerase activity"/>
    <property type="evidence" value="ECO:0007669"/>
    <property type="project" value="UniProtKB-EC"/>
</dbReference>
<dbReference type="GO" id="GO:0004651">
    <property type="term" value="F:polynucleotide 5'-phosphatase activity"/>
    <property type="evidence" value="ECO:0007669"/>
    <property type="project" value="UniProtKB-EC"/>
</dbReference>
<dbReference type="GO" id="GO:0003723">
    <property type="term" value="F:RNA binding"/>
    <property type="evidence" value="ECO:0007669"/>
    <property type="project" value="UniProtKB-KW"/>
</dbReference>
<dbReference type="GO" id="GO:0003724">
    <property type="term" value="F:RNA helicase activity"/>
    <property type="evidence" value="ECO:0007669"/>
    <property type="project" value="UniProtKB-EC"/>
</dbReference>
<dbReference type="GO" id="GO:0003968">
    <property type="term" value="F:RNA-directed RNA polymerase activity"/>
    <property type="evidence" value="ECO:0007669"/>
    <property type="project" value="UniProtKB-KW"/>
</dbReference>
<dbReference type="GO" id="GO:0006370">
    <property type="term" value="P:7-methylguanosine mRNA capping"/>
    <property type="evidence" value="ECO:0007669"/>
    <property type="project" value="UniProtKB-KW"/>
</dbReference>
<dbReference type="GO" id="GO:0006351">
    <property type="term" value="P:DNA-templated transcription"/>
    <property type="evidence" value="ECO:0007669"/>
    <property type="project" value="InterPro"/>
</dbReference>
<dbReference type="GO" id="GO:0032259">
    <property type="term" value="P:methylation"/>
    <property type="evidence" value="ECO:0007669"/>
    <property type="project" value="UniProtKB-KW"/>
</dbReference>
<dbReference type="GO" id="GO:0016556">
    <property type="term" value="P:mRNA modification"/>
    <property type="evidence" value="ECO:0007669"/>
    <property type="project" value="InterPro"/>
</dbReference>
<dbReference type="GO" id="GO:0006508">
    <property type="term" value="P:proteolysis"/>
    <property type="evidence" value="ECO:0007669"/>
    <property type="project" value="UniProtKB-KW"/>
</dbReference>
<dbReference type="GO" id="GO:0039657">
    <property type="term" value="P:symbiont-mediated suppression of host gene expression"/>
    <property type="evidence" value="ECO:0007669"/>
    <property type="project" value="UniProtKB-KW"/>
</dbReference>
<dbReference type="GO" id="GO:0039523">
    <property type="term" value="P:symbiont-mediated suppression of host mRNA transcription via inhibition of RNA polymerase II activity"/>
    <property type="evidence" value="ECO:0007669"/>
    <property type="project" value="UniProtKB-KW"/>
</dbReference>
<dbReference type="GO" id="GO:0039694">
    <property type="term" value="P:viral RNA genome replication"/>
    <property type="evidence" value="ECO:0007669"/>
    <property type="project" value="InterPro"/>
</dbReference>
<dbReference type="CDD" id="cd21557">
    <property type="entry name" value="Macro_X_Nsp3-like"/>
    <property type="match status" value="1"/>
</dbReference>
<dbReference type="CDD" id="cd23250">
    <property type="entry name" value="Togaviridae_RdRp"/>
    <property type="match status" value="1"/>
</dbReference>
<dbReference type="FunFam" id="3.40.220.10:FF:000015">
    <property type="entry name" value="Polyprotein P1234"/>
    <property type="match status" value="1"/>
</dbReference>
<dbReference type="FunFam" id="3.40.50.300:FF:001415">
    <property type="entry name" value="Polyprotein P1234"/>
    <property type="match status" value="1"/>
</dbReference>
<dbReference type="Gene3D" id="3.90.70.110">
    <property type="entry name" value="Alphavirus nsP2 protease domain"/>
    <property type="match status" value="1"/>
</dbReference>
<dbReference type="Gene3D" id="3.40.220.10">
    <property type="entry name" value="Leucine Aminopeptidase, subunit E, domain 1"/>
    <property type="match status" value="1"/>
</dbReference>
<dbReference type="Gene3D" id="3.40.50.300">
    <property type="entry name" value="P-loop containing nucleotide triphosphate hydrolases"/>
    <property type="match status" value="2"/>
</dbReference>
<dbReference type="Gene3D" id="3.40.50.150">
    <property type="entry name" value="Vaccinia Virus protein VP39"/>
    <property type="match status" value="1"/>
</dbReference>
<dbReference type="InterPro" id="IPR027351">
    <property type="entry name" value="(+)RNA_virus_helicase_core_dom"/>
</dbReference>
<dbReference type="InterPro" id="IPR002588">
    <property type="entry name" value="Alphavirus-like_MT_dom"/>
</dbReference>
<dbReference type="InterPro" id="IPR002620">
    <property type="entry name" value="Alphavirus_nsp2pro"/>
</dbReference>
<dbReference type="InterPro" id="IPR044936">
    <property type="entry name" value="Alphavirus_nsp2pro_sf"/>
</dbReference>
<dbReference type="InterPro" id="IPR043502">
    <property type="entry name" value="DNA/RNA_pol_sf"/>
</dbReference>
<dbReference type="InterPro" id="IPR002589">
    <property type="entry name" value="Macro_dom"/>
</dbReference>
<dbReference type="InterPro" id="IPR043472">
    <property type="entry name" value="Macro_dom-like"/>
</dbReference>
<dbReference type="InterPro" id="IPR044371">
    <property type="entry name" value="Macro_X_NSP3-like"/>
</dbReference>
<dbReference type="InterPro" id="IPR048891">
    <property type="entry name" value="nsP3_ZBD"/>
</dbReference>
<dbReference type="InterPro" id="IPR027417">
    <property type="entry name" value="P-loop_NTPase"/>
</dbReference>
<dbReference type="InterPro" id="IPR001788">
    <property type="entry name" value="RNA-dep_RNA_pol_alsuvir"/>
</dbReference>
<dbReference type="InterPro" id="IPR007094">
    <property type="entry name" value="RNA-dir_pol_PSvirus"/>
</dbReference>
<dbReference type="InterPro" id="IPR029063">
    <property type="entry name" value="SAM-dependent_MTases_sf"/>
</dbReference>
<dbReference type="InterPro" id="IPR047311">
    <property type="entry name" value="Togaviridae_RdRp"/>
</dbReference>
<dbReference type="InterPro" id="IPR049329">
    <property type="entry name" value="ToMV_Hel_N"/>
</dbReference>
<dbReference type="Pfam" id="PF01661">
    <property type="entry name" value="Macro"/>
    <property type="match status" value="1"/>
</dbReference>
<dbReference type="Pfam" id="PF20852">
    <property type="entry name" value="nsP3_ZBD"/>
    <property type="match status" value="1"/>
</dbReference>
<dbReference type="Pfam" id="PF01707">
    <property type="entry name" value="Peptidase_C9"/>
    <property type="match status" value="1"/>
</dbReference>
<dbReference type="Pfam" id="PF00978">
    <property type="entry name" value="RdRP_2"/>
    <property type="match status" value="1"/>
</dbReference>
<dbReference type="Pfam" id="PF20896">
    <property type="entry name" value="ToMV_Hel_N"/>
    <property type="match status" value="1"/>
</dbReference>
<dbReference type="Pfam" id="PF01443">
    <property type="entry name" value="Viral_helicase1"/>
    <property type="match status" value="1"/>
</dbReference>
<dbReference type="Pfam" id="PF01660">
    <property type="entry name" value="Vmethyltransf"/>
    <property type="match status" value="1"/>
</dbReference>
<dbReference type="SMART" id="SM00506">
    <property type="entry name" value="A1pp"/>
    <property type="match status" value="1"/>
</dbReference>
<dbReference type="SUPFAM" id="SSF56672">
    <property type="entry name" value="DNA/RNA polymerases"/>
    <property type="match status" value="1"/>
</dbReference>
<dbReference type="SUPFAM" id="SSF52949">
    <property type="entry name" value="Macro domain-like"/>
    <property type="match status" value="1"/>
</dbReference>
<dbReference type="SUPFAM" id="SSF52540">
    <property type="entry name" value="P-loop containing nucleoside triphosphate hydrolases"/>
    <property type="match status" value="1"/>
</dbReference>
<dbReference type="PROSITE" id="PS51743">
    <property type="entry name" value="ALPHAVIRUS_MT"/>
    <property type="match status" value="1"/>
</dbReference>
<dbReference type="PROSITE" id="PS51154">
    <property type="entry name" value="MACRO"/>
    <property type="match status" value="1"/>
</dbReference>
<dbReference type="PROSITE" id="PS51520">
    <property type="entry name" value="NSP2PRO"/>
    <property type="match status" value="1"/>
</dbReference>
<dbReference type="PROSITE" id="PS51657">
    <property type="entry name" value="PSRV_HELICASE"/>
    <property type="match status" value="1"/>
</dbReference>
<dbReference type="PROSITE" id="PS50507">
    <property type="entry name" value="RDRP_SSRNA_POS"/>
    <property type="match status" value="1"/>
</dbReference>
<reference key="1">
    <citation type="submission" date="2004-07" db="EMBL/GenBank/DDBJ databases">
        <title>Complete genome sequence of Getahvirus.</title>
        <authorList>
            <person name="Kim C.-J."/>
            <person name="Lee J.-Y."/>
            <person name="Cruz D.J.M."/>
        </authorList>
    </citation>
    <scope>NUCLEOTIDE SEQUENCE [GENOMIC RNA]</scope>
</reference>
<organismHost>
    <name type="scientific">Aedes vexans</name>
    <name type="common">Inland floodwater mosquito</name>
    <name type="synonym">Culex vexans</name>
    <dbReference type="NCBI Taxonomy" id="7163"/>
</organismHost>
<organismHost>
    <name type="scientific">Culex tritaeniorhynchus</name>
    <name type="common">Mosquito</name>
    <dbReference type="NCBI Taxonomy" id="7178"/>
</organismHost>
<organismHost>
    <name type="scientific">Equus caballus</name>
    <name type="common">Horse</name>
    <dbReference type="NCBI Taxonomy" id="9796"/>
</organismHost>
<organismHost>
    <name type="scientific">Homo sapiens</name>
    <name type="common">Human</name>
    <dbReference type="NCBI Taxonomy" id="9606"/>
</organismHost>
<organismHost>
    <name type="scientific">Sus scrofa</name>
    <name type="common">Pig</name>
    <dbReference type="NCBI Taxonomy" id="9823"/>
</organismHost>
<organismHost>
    <name type="scientific">Vulpes vulpes</name>
    <name type="common">Red fox</name>
    <dbReference type="NCBI Taxonomy" id="9627"/>
</organismHost>
<comment type="function">
    <molecule>Polyprotein P1234</molecule>
    <text evidence="6">Inactive precursor of the viral replicase, which is activated by cleavages carried out by the viral protease nsP2.</text>
</comment>
<comment type="function">
    <molecule>Polyprotein P123</molecule>
    <text evidence="2">The early replication complex formed by the polyprotein P123 and nsP4 synthesizes minus-strand RNAs (By similarity). As soon P123 is cleaved into mature proteins, the plus-strand RNAs synthesis begins (By similarity).</text>
</comment>
<comment type="function">
    <molecule>Polyprotein P123'</molecule>
    <text evidence="13">The early replication complex formed by the polyprotein P123' and nsP4 synthesizes minus-strand RNAs (Probable). Polyprotein P123' is a short-lived polyprotein that accumulates during early stage of infection (Probable). As soon P123' is cleaved into mature proteins, the plus-strand RNAs synthesis begins (Probable).</text>
</comment>
<comment type="function">
    <molecule>mRNA-capping enzyme nsP1</molecule>
    <text evidence="2 3 6 13">Cytoplasmic capping enzyme that catalyzes two virus-specific reactions: methyltransferase and nsP1 guanylyltransferase (By similarity). mRNA-capping is necessary since all viral RNAs are synthesized in the cytoplasm, and host capping enzymes are restricted to the nucleus (Probable). The enzymatic reaction involves a covalent link between 7-methyl-GMP and nsP1, whereas eukaryotic capping enzymes form a covalent complex only with GMP (By similarity). nsP1 capping consists in the following reactions: GTP is first methylated into 7-methyl-GMP and then is covalently linked to nsP1 to form the m7GMp-nsP1 complex from which 7-methyl-GMP complex is transferred to the mRNA to create the cap structure (By similarity). NsP1 is needed for the initiation of the minus-strand RNAs synthesis (By similarity). Probably serves as a membrane anchor for the replication complex composed of nsP1-nsP4 (By similarity). Palmitoylated nsP1 is remodeling host cell cytoskeleton, and induces filopodium-like structure formation at the surface of the host cell (By similarity).</text>
</comment>
<comment type="function">
    <molecule>Protease nsP2</molecule>
    <text evidence="2 3 6">Multifunctional protein whose N-terminus is part of the RNA polymerase complex and displays NTPase, RNA triphosphatase and helicase activities (By similarity). NTPase and RNA triphosphatase are involved in viral RNA capping and helicase keeps a check on the dsRNA replication intermediates (By similarity). The C-terminus harbors a protease that specifically cleaves the polyproteins and releases the mature proteins (By similarity). Required for the shutoff of minus-strand RNAs synthesis (By similarity). Specifically inhibits the host IFN response by promoting the nuclear export of host STAT1 (By similarity). Also inhibits host transcription by inducing rapid proteasome-dependent degradation of POLR2A, a catalytic subunit of the RNAPII complex (By similarity). The resulting inhibition of cellular protein synthesis serves to ensure maximal viral gene expression and to evade host immune response (By similarity).</text>
</comment>
<comment type="function">
    <molecule>Non-structural protein 3'</molecule>
    <text evidence="2 13">Seems to be essential for minus-strand RNAs and subgenomic 26S mRNAs synthesis (By similarity). Displays mono-ADP-ribosylhydrolase activity (Probable). ADP-ribosylation is a post-translational modification that controls various processes of the host cell and the virus probably needs to revert it for optimal viral replication (Probable). Binds proteins of FXR family and sequesters them into the viral RNA replication complexes thereby inhibiting the formation of host stress granules on viral mRNAs (Probable). The nsp3'-FXR complexes bind viral RNAs and probably orchestrate the assembly of viral replication complexes, thanks to the ability of FXR family members to self-assemble and bind DNA (Probable).</text>
</comment>
<comment type="function">
    <molecule>Non-structural protein 3</molecule>
    <text evidence="2 6">Seems to be essential for minus-strand RNAs and subgenomic 26S mRNAs synthesis (By similarity). Displays mono-ADP-ribosylhydrolase activity (By similarity). ADP-ribosylation is a post-translantional modification that controls various processes of the host cell and the virus probably needs to revert it for optimal viral replication (By similarity). Binds proteins of G3BP family and sequesters them into the viral RNA replication complexes thereby inhibiting the formation of host stress granules on viral mRNAs (By similarity). The nsp3-G3BP complexes bind viral RNAs and probably orchestrate the assembly of viral replication complexes, thanks to the ability of G3BP family members to self-assemble and bind DNA (By similarity).</text>
</comment>
<comment type="function">
    <molecule>RNA-directed RNA polymerase nsP4</molecule>
    <text evidence="2">RNA dependent RNA polymerase (By similarity). Replicates genomic and antigenomic RNA by recognizing replications specific signals. The early replication complex formed by the polyprotein P123 and nsP4 synthesizes minus-strand RNAs (By similarity). The late replication complex composed of fully processed nsP1-nsP4 is responsible for the production of genomic and subgenomic plus-strand RNAs (By similarity). The core catalytic domain of nsP4 also possesses terminal adenylyltransferase (TATase) activity that is probably involved in maintenance and repair of the poly(A) tail, an element required for replication of the viral genome (By similarity).</text>
</comment>
<comment type="catalytic activity">
    <reaction evidence="4">
        <text>GTP + S-adenosyl-L-methionine = N(7)-methyl-GTP + S-adenosyl-L-homocysteine</text>
        <dbReference type="Rhea" id="RHEA:46948"/>
        <dbReference type="ChEBI" id="CHEBI:37565"/>
        <dbReference type="ChEBI" id="CHEBI:57856"/>
        <dbReference type="ChEBI" id="CHEBI:59789"/>
        <dbReference type="ChEBI" id="CHEBI:87133"/>
    </reaction>
</comment>
<comment type="catalytic activity">
    <reaction evidence="2">
        <text>N(7)-methyl-GTP + L-histidyl-[protein] = N(tele)-(N(7)-methylguanosine 5'-phospho)-L-histidyl-[protein] + diphosphate</text>
        <dbReference type="Rhea" id="RHEA:54792"/>
        <dbReference type="Rhea" id="RHEA-COMP:9745"/>
        <dbReference type="Rhea" id="RHEA-COMP:13995"/>
        <dbReference type="ChEBI" id="CHEBI:29979"/>
        <dbReference type="ChEBI" id="CHEBI:33019"/>
        <dbReference type="ChEBI" id="CHEBI:87133"/>
        <dbReference type="ChEBI" id="CHEBI:138334"/>
    </reaction>
    <physiologicalReaction direction="left-to-right" evidence="2">
        <dbReference type="Rhea" id="RHEA:54793"/>
    </physiologicalReaction>
</comment>
<comment type="catalytic activity">
    <reaction evidence="4">
        <text>N(tele)-(N(7)-methylguanosine 5'-phospho)-L-histidyl-[protein] + a 5'-end diphospho-(purine-ribonucleoside) in mRNA + H(+) = a 5'-end (N(7)-methyl 5'-triphosphoguanosine)-(purine-ribonucleoside) in mRNA + L-histidyl-[protein]</text>
        <dbReference type="Rhea" id="RHEA:54800"/>
        <dbReference type="Rhea" id="RHEA-COMP:9745"/>
        <dbReference type="Rhea" id="RHEA-COMP:12925"/>
        <dbReference type="Rhea" id="RHEA-COMP:13929"/>
        <dbReference type="Rhea" id="RHEA-COMP:13995"/>
        <dbReference type="ChEBI" id="CHEBI:15378"/>
        <dbReference type="ChEBI" id="CHEBI:29979"/>
        <dbReference type="ChEBI" id="CHEBI:133968"/>
        <dbReference type="ChEBI" id="CHEBI:138276"/>
        <dbReference type="ChEBI" id="CHEBI:138334"/>
    </reaction>
</comment>
<comment type="catalytic activity">
    <reaction evidence="3">
        <text>a 5'-end triphospho-ribonucleoside in mRNA + H2O = a 5'-end diphospho-ribonucleoside in mRNA + phosphate + H(+)</text>
        <dbReference type="Rhea" id="RHEA:67004"/>
        <dbReference type="Rhea" id="RHEA-COMP:17164"/>
        <dbReference type="Rhea" id="RHEA-COMP:17165"/>
        <dbReference type="ChEBI" id="CHEBI:15377"/>
        <dbReference type="ChEBI" id="CHEBI:15378"/>
        <dbReference type="ChEBI" id="CHEBI:43474"/>
        <dbReference type="ChEBI" id="CHEBI:167616"/>
        <dbReference type="ChEBI" id="CHEBI:167618"/>
        <dbReference type="EC" id="3.6.1.74"/>
    </reaction>
    <physiologicalReaction direction="left-to-right" evidence="3">
        <dbReference type="Rhea" id="RHEA:67005"/>
    </physiologicalReaction>
</comment>
<comment type="catalytic activity">
    <reaction evidence="6">
        <text>a ribonucleoside 5'-triphosphate + H2O = a ribonucleoside 5'-diphosphate + phosphate + H(+)</text>
        <dbReference type="Rhea" id="RHEA:23680"/>
        <dbReference type="ChEBI" id="CHEBI:15377"/>
        <dbReference type="ChEBI" id="CHEBI:15378"/>
        <dbReference type="ChEBI" id="CHEBI:43474"/>
        <dbReference type="ChEBI" id="CHEBI:57930"/>
        <dbReference type="ChEBI" id="CHEBI:61557"/>
        <dbReference type="EC" id="3.6.1.15"/>
    </reaction>
</comment>
<comment type="catalytic activity">
    <reaction evidence="6">
        <text>ATP + H2O = ADP + phosphate + H(+)</text>
        <dbReference type="Rhea" id="RHEA:13065"/>
        <dbReference type="ChEBI" id="CHEBI:15377"/>
        <dbReference type="ChEBI" id="CHEBI:15378"/>
        <dbReference type="ChEBI" id="CHEBI:30616"/>
        <dbReference type="ChEBI" id="CHEBI:43474"/>
        <dbReference type="ChEBI" id="CHEBI:456216"/>
        <dbReference type="EC" id="3.6.4.13"/>
    </reaction>
</comment>
<comment type="catalytic activity">
    <reaction evidence="8">
        <text>RNA(n) + a ribonucleoside 5'-triphosphate = RNA(n+1) + diphosphate</text>
        <dbReference type="Rhea" id="RHEA:21248"/>
        <dbReference type="Rhea" id="RHEA-COMP:14527"/>
        <dbReference type="Rhea" id="RHEA-COMP:17342"/>
        <dbReference type="ChEBI" id="CHEBI:33019"/>
        <dbReference type="ChEBI" id="CHEBI:61557"/>
        <dbReference type="ChEBI" id="CHEBI:140395"/>
        <dbReference type="EC" id="2.7.7.48"/>
    </reaction>
</comment>
<comment type="catalytic activity">
    <reaction evidence="2">
        <text>RNA(n) + ATP = RNA(n)-3'-adenine ribonucleotide + diphosphate</text>
        <dbReference type="Rhea" id="RHEA:11332"/>
        <dbReference type="Rhea" id="RHEA-COMP:14527"/>
        <dbReference type="Rhea" id="RHEA-COMP:17347"/>
        <dbReference type="ChEBI" id="CHEBI:30616"/>
        <dbReference type="ChEBI" id="CHEBI:33019"/>
        <dbReference type="ChEBI" id="CHEBI:140395"/>
        <dbReference type="ChEBI" id="CHEBI:173115"/>
        <dbReference type="EC" id="2.7.7.19"/>
    </reaction>
</comment>
<comment type="catalytic activity">
    <reaction evidence="2">
        <text>4-O-(ADP-D-ribosyl)-L-aspartyl-[protein] + H2O = L-aspartyl-[protein] + ADP-D-ribose + H(+)</text>
        <dbReference type="Rhea" id="RHEA:54428"/>
        <dbReference type="Rhea" id="RHEA-COMP:9867"/>
        <dbReference type="Rhea" id="RHEA-COMP:13832"/>
        <dbReference type="ChEBI" id="CHEBI:15377"/>
        <dbReference type="ChEBI" id="CHEBI:15378"/>
        <dbReference type="ChEBI" id="CHEBI:29961"/>
        <dbReference type="ChEBI" id="CHEBI:57967"/>
        <dbReference type="ChEBI" id="CHEBI:138102"/>
    </reaction>
    <physiologicalReaction direction="left-to-right" evidence="2">
        <dbReference type="Rhea" id="RHEA:54429"/>
    </physiologicalReaction>
</comment>
<comment type="catalytic activity">
    <reaction evidence="2">
        <text>5-O-(ADP-D-ribosyl)-L-glutamyl-[protein] + H2O = L-glutamyl-[protein] + ADP-D-ribose + H(+)</text>
        <dbReference type="Rhea" id="RHEA:58248"/>
        <dbReference type="Rhea" id="RHEA-COMP:10208"/>
        <dbReference type="Rhea" id="RHEA-COMP:15089"/>
        <dbReference type="ChEBI" id="CHEBI:15377"/>
        <dbReference type="ChEBI" id="CHEBI:15378"/>
        <dbReference type="ChEBI" id="CHEBI:29973"/>
        <dbReference type="ChEBI" id="CHEBI:57967"/>
        <dbReference type="ChEBI" id="CHEBI:142540"/>
    </reaction>
    <physiologicalReaction direction="left-to-right" evidence="2">
        <dbReference type="Rhea" id="RHEA:58249"/>
    </physiologicalReaction>
</comment>
<comment type="catalytic activity">
    <reaction evidence="6">
        <text>ADP-alpha-D-ribose 1''-phosphate + H2O = ADP-D-ribose + phosphate</text>
        <dbReference type="Rhea" id="RHEA:25029"/>
        <dbReference type="ChEBI" id="CHEBI:15377"/>
        <dbReference type="ChEBI" id="CHEBI:43474"/>
        <dbReference type="ChEBI" id="CHEBI:57967"/>
        <dbReference type="ChEBI" id="CHEBI:58753"/>
        <dbReference type="EC" id="3.1.3.84"/>
    </reaction>
    <physiologicalReaction direction="left-to-right" evidence="6">
        <dbReference type="Rhea" id="RHEA:25030"/>
    </physiologicalReaction>
</comment>
<comment type="cofactor">
    <cofactor evidence="2">
        <name>Mg(2+)</name>
        <dbReference type="ChEBI" id="CHEBI:18420"/>
    </cofactor>
    <cofactor evidence="2">
        <name>Mn(2+)</name>
        <dbReference type="ChEBI" id="CHEBI:29035"/>
    </cofactor>
    <text evidence="2">For nsP4 adenylyltransferase activity; Mn(2+) supports catalysis at 60% of the levels observed with Mg(2+).</text>
</comment>
<comment type="cofactor">
    <cofactor evidence="2">
        <name>Mg(2+)</name>
        <dbReference type="ChEBI" id="CHEBI:18420"/>
    </cofactor>
    <text evidence="2">For nsP4 RNA-directed RNA polymerase activity.</text>
</comment>
<comment type="cofactor">
    <cofactor evidence="4">
        <name>Mg(2+)</name>
        <dbReference type="ChEBI" id="CHEBI:18420"/>
    </cofactor>
    <text evidence="4">For nsP1 guanylylation.</text>
</comment>
<comment type="cofactor">
    <cofactor>
        <name>Mg(2+)</name>
        <dbReference type="ChEBI" id="CHEBI:18420"/>
    </cofactor>
    <text evidence="6">For nsP2 RNA triphosphatase activity.</text>
</comment>
<comment type="cofactor">
    <cofactor>
        <name>Mg(2+)</name>
        <dbReference type="ChEBI" id="CHEBI:18420"/>
    </cofactor>
    <text evidence="6">For nsP2 NTPase activity.</text>
</comment>
<comment type="subunit">
    <molecule>mRNA-capping enzyme nsP1</molecule>
    <text evidence="2 4">Interacts with non-structural protein 3 (By similarity). Interacts with RNA-directed RNA polymerase nsP4 (By similarity). Interacts with protease nsP2 (By similarity). interacts with itself (By similarity).</text>
</comment>
<comment type="subunit">
    <molecule>Non-structural protein 3</molecule>
    <text evidence="2 4">Interacts with mRNA-capping enzyme nsP1 (By similarity). Interacts with host DDX1 (By similarity). Interacts with host DDX3 (By similarity). Interacts (via C-terminus) with host G3BP1; this interaction inhibits the formation of host stress granules on viral mRNAs and the nsp3-G3BP1 complexes bind viral RNAs and probably orchestrate the assembly of viral replication complexes (By similarity). Interacts (via C-terminus) with host G3BP2; this interaction inhibits the formation of host stress granules on viral mRNAs and the nsp3-G3BP2 complexes bind viral RNAs and probably orchestrate the assembly of viral replication complexes (By similarity).</text>
</comment>
<comment type="subunit">
    <molecule>RNA-directed RNA polymerase nsP4</molecule>
    <text evidence="2 4">Interacts with mRNA-capping enzyme nsP1 (By similarity). Interacts with protease nsP2 (By similarity). interacts with itself (By similarity).</text>
</comment>
<comment type="subunit">
    <molecule>Protease nsP2</molecule>
    <text evidence="2 4">Interacts with RNA-directed RNA polymerase nsP4 (By similarity). Interacts with mRNA-capping enzyme nsP1 (By similarity). Interacts with KPNA1/karyopherin-alpha1; this interaction probably allows the active transport of protease nsP2 into the host nucleus (By similarity).</text>
</comment>
<comment type="subcellular location">
    <molecule>Polyprotein P1234</molecule>
    <subcellularLocation>
        <location evidence="13">Host cytoplasmic vesicle membrane</location>
        <topology evidence="13">Peripheral membrane protein</topology>
    </subcellularLocation>
    <text evidence="13">Part of cytoplasmic vesicles, which are probably formed at the plasma membrane and internalized leading to late endosomal/lysosomal spherules containing the replication complex.</text>
</comment>
<comment type="subcellular location">
    <molecule>Polyprotein P123'</molecule>
    <subcellularLocation>
        <location evidence="13">Host cytoplasmic vesicle membrane</location>
        <topology evidence="13">Peripheral membrane protein</topology>
    </subcellularLocation>
    <text evidence="13">Part of cytoplasmic vesicles, which are probably formed at the plasma membrane and internalized leading to late endosomal/lysosomal spherules containing the replication complex.</text>
</comment>
<comment type="subcellular location">
    <molecule>Polyprotein P123</molecule>
    <subcellularLocation>
        <location evidence="13">Host cytoplasmic vesicle membrane</location>
        <topology evidence="13">Peripheral membrane protein</topology>
    </subcellularLocation>
    <text evidence="13">Part of cytoplasmic vesicles, which are probably formed at the plasma membrane and internalized leading to late endosomal/lysosomal spherules containing the replication complex.</text>
</comment>
<comment type="subcellular location">
    <molecule>mRNA-capping enzyme nsP1</molecule>
    <subcellularLocation>
        <location evidence="3">Host cytoplasmic vesicle membrane</location>
        <topology evidence="3">Lipid-anchor</topology>
    </subcellularLocation>
    <subcellularLocation>
        <location evidence="3">Host cell membrane</location>
        <topology evidence="3">Lipid-anchor</topology>
        <orientation evidence="3">Cytoplasmic side</orientation>
    </subcellularLocation>
    <subcellularLocation>
        <location evidence="3">Host cell projection</location>
        <location evidence="3">Host filopodium</location>
    </subcellularLocation>
    <text evidence="3">In the late phase of infection, the polyprotein is quickly cleaved before localization to cellular membranes. Then a fraction of nsP1 localizes to the inner surface of the plasma membrane and its filopodial extensions. Only the palmitoylated nsP1 localizes to the host filopodia (By similarity). NsP1 is also part of cytoplasmic vesicles, which are probably formed at the plasma membrane and internalized leading to late endosomal/lysosomal spherules containing the replication complex (By similarity).</text>
</comment>
<comment type="subcellular location">
    <molecule>Protease nsP2</molecule>
    <subcellularLocation>
        <location evidence="3">Host cytoplasmic vesicle membrane</location>
        <topology evidence="3">Peripheral membrane protein</topology>
    </subcellularLocation>
    <subcellularLocation>
        <location evidence="4">Host nucleus</location>
    </subcellularLocation>
    <subcellularLocation>
        <location evidence="4">Host cytoplasm</location>
    </subcellularLocation>
    <text evidence="3 4">In the late phase of infection, the polyprotein is quickly cleaved before localization to cellular membranes. Then approximately half of nsP2 is found in the nucleus (By similarity). Shuttles between cytoplasm and nucleus (By similarity). NsP2 is also part of cytoplasmic vesicles, which are probably formed at the plasma membrane and internalized leading to late endosomal/lysosomal spherules containing the replication complex (By similarity).</text>
</comment>
<comment type="subcellular location">
    <molecule>Non-structural protein 3</molecule>
    <subcellularLocation>
        <location evidence="2">Host cytoplasmic vesicle membrane</location>
        <topology evidence="13">Peripheral membrane protein</topology>
    </subcellularLocation>
    <text evidence="2">In the late phase of infection, the polyprotein is quickly cleaved before localization to cellular membranes. Then nsP3 and nsP3' form aggregates in cytoplasm (By similarity). NsP3 is also part of cytoplasmic vesicles, which are probably formed at the plasma membrane and internalized leading to late endosomal/lysosomal spherules containing the replication complex (By similarity).</text>
</comment>
<comment type="subcellular location">
    <molecule>Non-structural protein 3'</molecule>
    <subcellularLocation>
        <location evidence="2">Host cytoplasmic vesicle membrane</location>
        <topology evidence="13">Peripheral membrane protein</topology>
    </subcellularLocation>
    <text evidence="2">In the late phase of infection, the polyprotein is quickly cleaved before localization to cellular membranes. Then nsP3 and nsP3' form aggregates in cytoplasm (By similarity). NsP3' is also part of cytoplasmic vesicles, which are probably formed at the plasma membrane and internalized leading to late endosomal/lysosomal spherules containing the replication complex (By similarity).</text>
</comment>
<comment type="subcellular location">
    <molecule>RNA-directed RNA polymerase nsP4</molecule>
    <subcellularLocation>
        <location>Host cytoplasmic vesicle membrane</location>
        <topology evidence="2">Peripheral membrane protein</topology>
    </subcellularLocation>
    <text evidence="3">NsP4 is part of cytoplasmic vesicles, which are probably formed at the plasma membrane and internalized leading to late endosomal/lysosomal spherules containing the replication complex.</text>
</comment>
<comment type="domain">
    <molecule>Protease nsP2</molecule>
    <text evidence="4 6">The N-terminus exhibits NTPase and RNA triphosphatase activities and is proposed to have helicase activity, whereas the C-terminus possesses protease activity (By similarity). Contains a nuclear localization signal and a nuclear export signal, these two motifs are probably involved in the shuttling between the cytoplasm and the nucleus of nsP2 (By similarity). The C-terminus is required for promoting the export of host STAT1 (By similarity).</text>
</comment>
<comment type="domain">
    <molecule>Non-structural protein 3</molecule>
    <text evidence="2 3">In the N-terminus, the macro domain displays a mono-ADP-ribosylhydrolase activity (By similarity). The central part has a zinc-binding function (By similarity). The C-terminus contains two FGDF motifs necessary and sufficient for formation of the nsP3/G3BP1 complex (By similarity).</text>
</comment>
<comment type="domain">
    <molecule>Non-structural protein 3'</molecule>
    <text evidence="2 3">In the N-terminus, the macro domain displays a mono-ADP-ribosylhydrolase activity (By similarity). The central part has a zinc-binding function (By similarity). The C-terminus contains two FGDF motifs necessary and sufficient for formation of the nsP3'/G3BP1 complex (By similarity).</text>
</comment>
<comment type="PTM">
    <molecule>Polyprotein P1234</molecule>
    <text evidence="2">Specific enzymatic cleavages in vivo yield mature proteins (By similarity). The processing of the polyprotein is temporally regulated (By similarity). In early stages (1.7 hpi), P1234 is first cleaved in trans through its nsP2 protease activity, releasing P123' and nsP4, which associate to form the early replication complex (By similarity). At the same time, P1234 is also cut at the nsP1/nsP2 site early in infection but with lower efficiency (By similarity). After replication of the viral minus-strand RNAs (4 hpi), the polyproteins are cut at the nsP1/nsP2 and nsP2/nsP3 sites very efficiently, preventing accumulation of P123' and P1234 and allowing the formation of the late replication complex (By similarity). NsP3'/nsP4 site is not cleaved anymore and P34 is produced rather than nsP4 (By similarity).</text>
</comment>
<comment type="PTM">
    <molecule>Polyprotein P123</molecule>
    <text evidence="2">Specific enzymatic cleavages in vivo yield mature proteins (By similarity). The processing of the polyprotein is temporally regulated (By similarity). In early stages (1.7 hpi), P123 is cleaved at the nsP1/nsP2 site with low efficiency (By similarity). After replication of the viral minus-strand RNAs (4 hpi), the polyproteins are cut at the nsP1/nsP2 and nsP2/nsP3 sites very efficiently, preventing accumulation of P123 and allowing the formation of the late replication complex (By similarity).</text>
</comment>
<comment type="PTM">
    <molecule>Polyprotein P123'</molecule>
    <text evidence="2">Specific enzymatic cleavages in vivo yield mature proteins (By similarity). The processing of the polyprotein is temporally regulated (By similarity). In early stages (1.7 hpi), P123 is cleaved at the nsP1/nsP2 site with low efficiency (By similarity). After replication of the viral minus-strand RNAs (4 hpi), the polyproteins are cut at the nsP1/nsP2 and nsP2/nsP3 sites very efficiently, preventing accumulation of P123 and allowing the formation of the late replication complex (By similarity).</text>
</comment>
<comment type="PTM">
    <molecule>mRNA-capping enzyme nsP1</molecule>
    <text evidence="6">Palmitoylated by host palmitoyltransferases ZDHHC2 and ZDHHC19.</text>
</comment>
<comment type="PTM">
    <molecule>Non-structural protein 3</molecule>
    <text evidence="3">Phosphorylated by host on serines and threonines.</text>
</comment>
<comment type="PTM">
    <molecule>Non-structural protein 3'</molecule>
    <text evidence="3">Phosphorylated by host on serines and threonines.</text>
</comment>
<comment type="PTM">
    <molecule>RNA-directed RNA polymerase nsP4</molecule>
    <text evidence="2">Ubiquitinated; targets the protein for rapid degradation via the ubiquitin system (By similarity). Nsp4 is present in extremely low quantities due to low frequency of translation through the amber stop-codon and the degradation by the ubiquitin pathway (By similarity).</text>
</comment>
<comment type="miscellaneous">
    <text evidence="2">Viral replication produces dsRNA in the late phase of infection, resulting in a strong activation of host EIF2AK2/PKR, leading to almost complete phosphorylation of EIF2A (By similarity). This inactivates completely cellular translation initiation, resulting shutoff of host proteins synthesis (By similarity). However, phosphorylation of EIF2A is probably not the only mechanism responsible for the host translation shutoff (By similarity). The viral translation can still occur normally because it relies on a hairpin structure in the coding region of sgRNA and is EIF2A-, EIF2D-, EIF4G- EIF4A-independent (By similarity).</text>
</comment>
<comment type="miscellaneous">
    <text evidence="1 2 13">The genome codes for P123, but readthrough of a terminator codon UGA occurs between the codons for Gln-1849 and Arg-1851 giving rise to P1234 (Probable). P1234 is cleaved quickly by nsP2 into P123' and nsP4 (By similarity). Further processing of p123' gives nsP1, nsP2 and nsP3' which is 6 amino acids longer than nsP3 since the cleavage site is after the readthrough (By similarity). This unusual molecular mechanism ensures that few nsP4 are produced compared to other non-structural proteins (By similarity). Mutant viruses with no alternative termination site grow significantly slower than wild-type virus (By similarity). The opal termination codon is frequently mutated to a sense codon on passage in cell culture (By similarity). The presence of the opal codon may be a requirement for viral maintenance in both vertebrate and invertebrate hosts and a selective advantage may be conferred in cell culture for the sense codon (By similarity).</text>
</comment>
<name>POLN_GETV</name>
<feature type="chain" id="PRO_0000308392" description="Polyprotein P1234">
    <location>
        <begin position="1"/>
        <end position="2467"/>
    </location>
</feature>
<feature type="chain" id="PRO_0000228773" description="Polyprotein P123'">
    <location>
        <begin position="1"/>
        <end position="1856"/>
    </location>
</feature>
<feature type="chain" id="PRO_0000228774" description="Polyprotein P123">
    <location>
        <begin position="1"/>
        <end position="1849"/>
    </location>
</feature>
<feature type="chain" id="PRO_0000228775" description="mRNA-capping enzyme nsP1">
    <location>
        <begin position="1"/>
        <end position="534"/>
    </location>
</feature>
<feature type="chain" id="PRO_0000228776" description="Protease nsP2">
    <location>
        <begin position="535"/>
        <end position="1332"/>
    </location>
</feature>
<feature type="chain" id="PRO_0000228777" description="Non-structural protein 3'">
    <location>
        <begin position="1333"/>
        <end position="1856"/>
    </location>
</feature>
<feature type="chain" id="PRO_0000228778" description="Non-structural protein 3">
    <location>
        <begin position="1333"/>
        <end position="1849"/>
    </location>
</feature>
<feature type="chain" id="PRO_0000228779" description="RNA-directed RNA polymerase nsP4">
    <location>
        <begin position="1857"/>
        <end position="2467"/>
    </location>
</feature>
<feature type="domain" description="Alphavirus-like MT" evidence="11">
    <location>
        <begin position="27"/>
        <end position="258"/>
    </location>
</feature>
<feature type="domain" description="(+)RNA virus helicase ATP-binding" evidence="10">
    <location>
        <begin position="689"/>
        <end position="841"/>
    </location>
</feature>
<feature type="domain" description="(+)RNA virus helicase C-terminal" evidence="10">
    <location>
        <begin position="842"/>
        <end position="990"/>
    </location>
</feature>
<feature type="domain" description="Peptidase C9" evidence="9">
    <location>
        <begin position="1003"/>
        <end position="1325"/>
    </location>
</feature>
<feature type="domain" description="Macro" evidence="7">
    <location>
        <begin position="1333"/>
        <end position="1492"/>
    </location>
</feature>
<feature type="domain" description="RdRp catalytic" evidence="8">
    <location>
        <begin position="2221"/>
        <end position="2336"/>
    </location>
</feature>
<feature type="region of interest" description="NsP1 membrane-binding" evidence="3">
    <location>
        <begin position="243"/>
        <end position="262"/>
    </location>
</feature>
<feature type="region of interest" description="Nucleolus localization signal" evidence="3">
    <location>
        <begin position="1004"/>
        <end position="1023"/>
    </location>
</feature>
<feature type="region of interest" description="Disordered" evidence="12">
    <location>
        <begin position="1768"/>
        <end position="1803"/>
    </location>
</feature>
<feature type="short sequence motif" description="Nuclear export signal" evidence="4">
    <location>
        <begin position="1056"/>
        <end position="1065"/>
    </location>
</feature>
<feature type="short sequence motif" description="Nuclear localization signal" evidence="3">
    <location>
        <begin position="1180"/>
        <end position="1184"/>
    </location>
</feature>
<feature type="short sequence motif" description="FGDF; binding to host G3BP1" evidence="3">
    <location>
        <begin position="1820"/>
        <end position="1823"/>
    </location>
</feature>
<feature type="short sequence motif" description="FGDF; binding to host G3BP1" evidence="3">
    <location>
        <begin position="1841"/>
        <end position="1844"/>
    </location>
</feature>
<feature type="compositionally biased region" description="Pro residues" evidence="12">
    <location>
        <begin position="1774"/>
        <end position="1783"/>
    </location>
</feature>
<feature type="active site" description="For cysteine protease nsP2 activity" evidence="9">
    <location>
        <position position="1012"/>
    </location>
</feature>
<feature type="active site" description="For cysteine protease nsP2 activity" evidence="9">
    <location>
        <position position="1081"/>
    </location>
</feature>
<feature type="binding site" evidence="10">
    <location>
        <begin position="720"/>
        <end position="727"/>
    </location>
    <ligand>
        <name>a ribonucleoside 5'-triphosphate</name>
        <dbReference type="ChEBI" id="CHEBI:61557"/>
    </ligand>
</feature>
<feature type="binding site" evidence="5">
    <location>
        <position position="1342"/>
    </location>
    <ligand>
        <name>ADP-D-ribose</name>
        <dbReference type="ChEBI" id="CHEBI:57967"/>
    </ligand>
</feature>
<feature type="binding site" evidence="6">
    <location>
        <position position="1356"/>
    </location>
    <ligand>
        <name>ADP-D-ribose</name>
        <dbReference type="ChEBI" id="CHEBI:57967"/>
    </ligand>
</feature>
<feature type="binding site" evidence="6">
    <location>
        <position position="1364"/>
    </location>
    <ligand>
        <name>ADP-D-ribose</name>
        <dbReference type="ChEBI" id="CHEBI:57967"/>
    </ligand>
</feature>
<feature type="binding site" evidence="5">
    <location>
        <position position="1444"/>
    </location>
    <ligand>
        <name>ADP-D-ribose</name>
        <dbReference type="ChEBI" id="CHEBI:57967"/>
    </ligand>
</feature>
<feature type="binding site" evidence="5">
    <location>
        <position position="1446"/>
    </location>
    <ligand>
        <name>ADP-D-ribose</name>
        <dbReference type="ChEBI" id="CHEBI:57967"/>
    </ligand>
</feature>
<feature type="binding site" evidence="2">
    <location>
        <position position="1594"/>
    </location>
    <ligand>
        <name>Zn(2+)</name>
        <dbReference type="ChEBI" id="CHEBI:29105"/>
    </ligand>
</feature>
<feature type="binding site" evidence="2">
    <location>
        <position position="1596"/>
    </location>
    <ligand>
        <name>Zn(2+)</name>
        <dbReference type="ChEBI" id="CHEBI:29105"/>
    </ligand>
</feature>
<feature type="binding site" evidence="2">
    <location>
        <position position="1619"/>
    </location>
    <ligand>
        <name>Zn(2+)</name>
        <dbReference type="ChEBI" id="CHEBI:29105"/>
    </ligand>
</feature>
<feature type="binding site" evidence="2">
    <location>
        <position position="1637"/>
    </location>
    <ligand>
        <name>Zn(2+)</name>
        <dbReference type="ChEBI" id="CHEBI:29105"/>
    </ligand>
</feature>
<feature type="site" description="Involved in the phosphoramide link with 7-methyl-GMP" evidence="4">
    <location>
        <position position="36"/>
    </location>
</feature>
<feature type="site" description="Cleavage; by protease nsP2" evidence="2">
    <location>
        <begin position="534"/>
        <end position="535"/>
    </location>
</feature>
<feature type="site" description="Cleavage; by protease nsP2" evidence="2">
    <location>
        <begin position="1332"/>
        <end position="1333"/>
    </location>
</feature>
<feature type="site" description="Cleavage; by protease nsP2" evidence="6">
    <location>
        <begin position="1856"/>
        <end position="1857"/>
    </location>
</feature>
<feature type="lipid moiety-binding region" description="S-palmitoyl cysteine; by host" evidence="6">
    <location>
        <position position="416"/>
    </location>
</feature>
<feature type="lipid moiety-binding region" description="S-palmitoyl cysteine; by host" evidence="6">
    <location>
        <position position="418"/>
    </location>
</feature>
<feature type="strand" evidence="14">
    <location>
        <begin position="1335"/>
        <end position="1341"/>
    </location>
</feature>
<feature type="helix" evidence="14">
    <location>
        <begin position="1343"/>
        <end position="1345"/>
    </location>
</feature>
<feature type="strand" evidence="14">
    <location>
        <begin position="1348"/>
        <end position="1354"/>
    </location>
</feature>
<feature type="helix" evidence="14">
    <location>
        <begin position="1365"/>
        <end position="1372"/>
    </location>
</feature>
<feature type="turn" evidence="14">
    <location>
        <begin position="1374"/>
        <end position="1379"/>
    </location>
</feature>
<feature type="strand" evidence="14">
    <location>
        <begin position="1387"/>
        <end position="1392"/>
    </location>
</feature>
<feature type="strand" evidence="14">
    <location>
        <begin position="1395"/>
        <end position="1400"/>
    </location>
</feature>
<feature type="helix" evidence="14">
    <location>
        <begin position="1410"/>
        <end position="1430"/>
    </location>
</feature>
<feature type="strand" evidence="14">
    <location>
        <begin position="1435"/>
        <end position="1439"/>
    </location>
</feature>
<feature type="helix" evidence="14">
    <location>
        <begin position="1453"/>
        <end position="1464"/>
    </location>
</feature>
<feature type="strand" evidence="14">
    <location>
        <begin position="1470"/>
        <end position="1476"/>
    </location>
</feature>
<feature type="helix" evidence="14">
    <location>
        <begin position="1478"/>
        <end position="1491"/>
    </location>
</feature>
<proteinExistence type="evidence at protein level"/>
<keyword id="KW-0002">3D-structure</keyword>
<keyword id="KW-0067">ATP-binding</keyword>
<keyword id="KW-1262">Eukaryotic host gene expression shutoff by virus</keyword>
<keyword id="KW-1191">Eukaryotic host transcription shutoff by virus</keyword>
<keyword id="KW-0342">GTP-binding</keyword>
<keyword id="KW-0347">Helicase</keyword>
<keyword id="KW-1032">Host cell membrane</keyword>
<keyword id="KW-1034">Host cell projection</keyword>
<keyword id="KW-1035">Host cytoplasm</keyword>
<keyword id="KW-1036">Host cytoplasmic vesicle</keyword>
<keyword id="KW-1190">Host gene expression shutoff by virus</keyword>
<keyword id="KW-1043">Host membrane</keyword>
<keyword id="KW-1048">Host nucleus</keyword>
<keyword id="KW-0945">Host-virus interaction</keyword>
<keyword id="KW-0378">Hydrolase</keyword>
<keyword id="KW-1104">Inhibition of host RNA polymerase II by virus</keyword>
<keyword id="KW-0449">Lipoprotein</keyword>
<keyword id="KW-0472">Membrane</keyword>
<keyword id="KW-0479">Metal-binding</keyword>
<keyword id="KW-0489">Methyltransferase</keyword>
<keyword id="KW-0506">mRNA capping</keyword>
<keyword id="KW-0507">mRNA processing</keyword>
<keyword id="KW-0511">Multifunctional enzyme</keyword>
<keyword id="KW-0547">Nucleotide-binding</keyword>
<keyword id="KW-0548">Nucleotidyltransferase</keyword>
<keyword id="KW-0564">Palmitate</keyword>
<keyword id="KW-0645">Protease</keyword>
<keyword id="KW-1159">RNA suppression of termination</keyword>
<keyword id="KW-0694">RNA-binding</keyword>
<keyword id="KW-0696">RNA-directed RNA polymerase</keyword>
<keyword id="KW-0949">S-adenosyl-L-methionine</keyword>
<keyword id="KW-0788">Thiol protease</keyword>
<keyword id="KW-0808">Transferase</keyword>
<keyword id="KW-0832">Ubl conjugation</keyword>
<keyword id="KW-0693">Viral RNA replication</keyword>
<keyword id="KW-0862">Zinc</keyword>